<protein>
    <recommendedName>
        <fullName evidence="1">Segregation and condensation protein A</fullName>
    </recommendedName>
</protein>
<accession>A7GS82</accession>
<sequence>MQYNFKVESFEGPLDLLLHLIHRYEIDIYNIPVAEITEQYLSYIHTMKELQLDVASEYLVMAATLLQIKSKMLLPKQEEDVHDSGEDFIDDPRQELMERLIEYKKYKQVAAELKEREQERAQLYTRPPIDFTSFQQEEAANLPLDVTLYDMLAAFQKMMRRKKSKRPVTARITRQEIPIEQRMTDILQKLETLGGRQSFYDLFADEEREVMVVTFLAILELMKHQQIVIEQEQNFDEIFLSCANHNSK</sequence>
<organism>
    <name type="scientific">Bacillus cytotoxicus (strain DSM 22905 / CIP 110041 / 391-98 / NVH 391-98)</name>
    <dbReference type="NCBI Taxonomy" id="315749"/>
    <lineage>
        <taxon>Bacteria</taxon>
        <taxon>Bacillati</taxon>
        <taxon>Bacillota</taxon>
        <taxon>Bacilli</taxon>
        <taxon>Bacillales</taxon>
        <taxon>Bacillaceae</taxon>
        <taxon>Bacillus</taxon>
        <taxon>Bacillus cereus group</taxon>
    </lineage>
</organism>
<name>SCPA_BACCN</name>
<dbReference type="EMBL" id="CP000764">
    <property type="protein sequence ID" value="ABS22990.1"/>
    <property type="molecule type" value="Genomic_DNA"/>
</dbReference>
<dbReference type="RefSeq" id="WP_012095214.1">
    <property type="nucleotide sequence ID" value="NC_009674.1"/>
</dbReference>
<dbReference type="SMR" id="A7GS82"/>
<dbReference type="STRING" id="315749.Bcer98_2757"/>
<dbReference type="GeneID" id="33898011"/>
<dbReference type="KEGG" id="bcy:Bcer98_2757"/>
<dbReference type="eggNOG" id="COG1354">
    <property type="taxonomic scope" value="Bacteria"/>
</dbReference>
<dbReference type="HOGENOM" id="CLU_038686_3_1_9"/>
<dbReference type="OrthoDB" id="9811016at2"/>
<dbReference type="Proteomes" id="UP000002300">
    <property type="component" value="Chromosome"/>
</dbReference>
<dbReference type="GO" id="GO:0005737">
    <property type="term" value="C:cytoplasm"/>
    <property type="evidence" value="ECO:0007669"/>
    <property type="project" value="UniProtKB-SubCell"/>
</dbReference>
<dbReference type="GO" id="GO:0051301">
    <property type="term" value="P:cell division"/>
    <property type="evidence" value="ECO:0007669"/>
    <property type="project" value="UniProtKB-KW"/>
</dbReference>
<dbReference type="GO" id="GO:0007059">
    <property type="term" value="P:chromosome segregation"/>
    <property type="evidence" value="ECO:0007669"/>
    <property type="project" value="UniProtKB-UniRule"/>
</dbReference>
<dbReference type="GO" id="GO:0006260">
    <property type="term" value="P:DNA replication"/>
    <property type="evidence" value="ECO:0007669"/>
    <property type="project" value="UniProtKB-UniRule"/>
</dbReference>
<dbReference type="Gene3D" id="6.10.250.2410">
    <property type="match status" value="1"/>
</dbReference>
<dbReference type="Gene3D" id="1.10.10.580">
    <property type="entry name" value="Structural maintenance of chromosome 1. Chain E"/>
    <property type="match status" value="1"/>
</dbReference>
<dbReference type="HAMAP" id="MF_01805">
    <property type="entry name" value="ScpA"/>
    <property type="match status" value="1"/>
</dbReference>
<dbReference type="InterPro" id="IPR003768">
    <property type="entry name" value="ScpA"/>
</dbReference>
<dbReference type="InterPro" id="IPR023093">
    <property type="entry name" value="ScpA-like_C"/>
</dbReference>
<dbReference type="NCBIfam" id="NF000992">
    <property type="entry name" value="PRK00104.1-1"/>
    <property type="match status" value="1"/>
</dbReference>
<dbReference type="NCBIfam" id="NF000995">
    <property type="entry name" value="PRK00104.1-4"/>
    <property type="match status" value="1"/>
</dbReference>
<dbReference type="PANTHER" id="PTHR33969">
    <property type="entry name" value="SEGREGATION AND CONDENSATION PROTEIN A"/>
    <property type="match status" value="1"/>
</dbReference>
<dbReference type="PANTHER" id="PTHR33969:SF2">
    <property type="entry name" value="SEGREGATION AND CONDENSATION PROTEIN A"/>
    <property type="match status" value="1"/>
</dbReference>
<dbReference type="Pfam" id="PF02616">
    <property type="entry name" value="SMC_ScpA"/>
    <property type="match status" value="1"/>
</dbReference>
<feature type="chain" id="PRO_1000088233" description="Segregation and condensation protein A">
    <location>
        <begin position="1"/>
        <end position="248"/>
    </location>
</feature>
<reference key="1">
    <citation type="journal article" date="2008" name="Chem. Biol. Interact.">
        <title>Extending the Bacillus cereus group genomics to putative food-borne pathogens of different toxicity.</title>
        <authorList>
            <person name="Lapidus A."/>
            <person name="Goltsman E."/>
            <person name="Auger S."/>
            <person name="Galleron N."/>
            <person name="Segurens B."/>
            <person name="Dossat C."/>
            <person name="Land M.L."/>
            <person name="Broussolle V."/>
            <person name="Brillard J."/>
            <person name="Guinebretiere M.-H."/>
            <person name="Sanchis V."/>
            <person name="Nguen-the C."/>
            <person name="Lereclus D."/>
            <person name="Richardson P."/>
            <person name="Wincker P."/>
            <person name="Weissenbach J."/>
            <person name="Ehrlich S.D."/>
            <person name="Sorokin A."/>
        </authorList>
    </citation>
    <scope>NUCLEOTIDE SEQUENCE [LARGE SCALE GENOMIC DNA]</scope>
    <source>
        <strain>DSM 22905 / CIP 110041 / 391-98 / NVH 391-98</strain>
    </source>
</reference>
<gene>
    <name evidence="1" type="primary">scpA</name>
    <name type="ordered locus">Bcer98_2757</name>
</gene>
<proteinExistence type="inferred from homology"/>
<comment type="function">
    <text evidence="1">Participates in chromosomal partition during cell division. May act via the formation of a condensin-like complex containing Smc and ScpB that pull DNA away from mid-cell into both cell halves.</text>
</comment>
<comment type="subunit">
    <text evidence="1">Component of a cohesin-like complex composed of ScpA, ScpB and the Smc homodimer, in which ScpA and ScpB bind to the head domain of Smc. The presence of the three proteins is required for the association of the complex with DNA.</text>
</comment>
<comment type="subcellular location">
    <subcellularLocation>
        <location evidence="1">Cytoplasm</location>
    </subcellularLocation>
    <text evidence="1">Associated with two foci at the outer edges of the nucleoid region in young cells, and at four foci within both cell halves in older cells.</text>
</comment>
<comment type="similarity">
    <text evidence="1">Belongs to the ScpA family.</text>
</comment>
<keyword id="KW-0131">Cell cycle</keyword>
<keyword id="KW-0132">Cell division</keyword>
<keyword id="KW-0159">Chromosome partition</keyword>
<keyword id="KW-0963">Cytoplasm</keyword>
<evidence type="ECO:0000255" key="1">
    <source>
        <dbReference type="HAMAP-Rule" id="MF_01805"/>
    </source>
</evidence>